<feature type="chain" id="PRO_1000149442" description="Putative D-alanyl-D-alanine carboxypeptidase">
    <location>
        <begin position="1"/>
        <end position="432"/>
    </location>
</feature>
<feature type="transmembrane region" description="Helical; Signal-anchor" evidence="1">
    <location>
        <begin position="7"/>
        <end position="25"/>
    </location>
</feature>
<proteinExistence type="inferred from homology"/>
<evidence type="ECO:0000255" key="1">
    <source>
        <dbReference type="HAMAP-Rule" id="MF_01034"/>
    </source>
</evidence>
<name>YFEW_SALDC</name>
<gene>
    <name evidence="1" type="primary">yfeW</name>
    <name type="ordered locus">SeD_A2844</name>
</gene>
<keyword id="KW-0121">Carboxypeptidase</keyword>
<keyword id="KW-0997">Cell inner membrane</keyword>
<keyword id="KW-1003">Cell membrane</keyword>
<keyword id="KW-0378">Hydrolase</keyword>
<keyword id="KW-0472">Membrane</keyword>
<keyword id="KW-0645">Protease</keyword>
<keyword id="KW-0812">Transmembrane</keyword>
<keyword id="KW-1133">Transmembrane helix</keyword>
<reference key="1">
    <citation type="journal article" date="2011" name="J. Bacteriol.">
        <title>Comparative genomics of 28 Salmonella enterica isolates: evidence for CRISPR-mediated adaptive sublineage evolution.</title>
        <authorList>
            <person name="Fricke W.F."/>
            <person name="Mammel M.K."/>
            <person name="McDermott P.F."/>
            <person name="Tartera C."/>
            <person name="White D.G."/>
            <person name="Leclerc J.E."/>
            <person name="Ravel J."/>
            <person name="Cebula T.A."/>
        </authorList>
    </citation>
    <scope>NUCLEOTIDE SEQUENCE [LARGE SCALE GENOMIC DNA]</scope>
    <source>
        <strain>CT_02021853</strain>
    </source>
</reference>
<accession>B5FQG8</accession>
<comment type="catalytic activity">
    <reaction evidence="1">
        <text>Preferential cleavage: (Ac)2-L-Lys-D-Ala-|-D-Ala. Also transpeptidation of peptidyl-alanyl moieties that are N-acyl substituents of D-alanine.</text>
        <dbReference type="EC" id="3.4.16.4"/>
    </reaction>
</comment>
<comment type="subcellular location">
    <subcellularLocation>
        <location evidence="1">Cell inner membrane</location>
        <topology evidence="1">Single-pass membrane protein</topology>
    </subcellularLocation>
</comment>
<comment type="similarity">
    <text evidence="1">Belongs to the peptidase S12 family. YfeW subfamily.</text>
</comment>
<protein>
    <recommendedName>
        <fullName evidence="1">Putative D-alanyl-D-alanine carboxypeptidase</fullName>
        <ecNumber evidence="1">3.4.16.4</ecNumber>
    </recommendedName>
    <alternativeName>
        <fullName evidence="1">DD-carboxypeptidase</fullName>
        <shortName evidence="1">DD-CPase</shortName>
    </alternativeName>
</protein>
<organism>
    <name type="scientific">Salmonella dublin (strain CT_02021853)</name>
    <dbReference type="NCBI Taxonomy" id="439851"/>
    <lineage>
        <taxon>Bacteria</taxon>
        <taxon>Pseudomonadati</taxon>
        <taxon>Pseudomonadota</taxon>
        <taxon>Gammaproteobacteria</taxon>
        <taxon>Enterobacterales</taxon>
        <taxon>Enterobacteriaceae</taxon>
        <taxon>Salmonella</taxon>
    </lineage>
</organism>
<sequence length="432" mass="47698">MKFTLVATVLLTFSLSAFAVEYPVLTTASPDQVGFDSQKLHRLDGWIQNQIDAGYPSINLLVIKDNHIVLQKAWGYAKKYDGSTLLAHPIRATTNTMYDLASNTKMYATNFALQKLVYEGKIDVNDLVSKYIPGFKDMPGDKIKGKDKLRIIDILHHVAGFPADPQYPNKNVAGKLFSQSKSTTLEMIKKTPLEYQPGSKHIYSDVDYMILGFIIESITAMPLDRYVETTIYKPLGLKHTVFNPLMKGFTPPQIAATELHGNTRDGVIHFPNIRTNTLWGQVHDEKAWYSMGGVSGHAGLFSDTHDMAVLMQVMLNGGGYGNVKLFDDKTVAQFTRRSPEDATFGLGWRVNGNASMTPTFGVLASPQTYGHTGWTGTLTSIDPVNHMAIVILGNRPHSPVANPKVNPNVFVSGLLPAATYGWIVDQIYGSLK</sequence>
<dbReference type="EC" id="3.4.16.4" evidence="1"/>
<dbReference type="EMBL" id="CP001144">
    <property type="protein sequence ID" value="ACH75075.1"/>
    <property type="molecule type" value="Genomic_DNA"/>
</dbReference>
<dbReference type="SMR" id="B5FQG8"/>
<dbReference type="MEROPS" id="S12.A03"/>
<dbReference type="KEGG" id="sed:SeD_A2844"/>
<dbReference type="HOGENOM" id="CLU_020027_1_2_6"/>
<dbReference type="Proteomes" id="UP000008322">
    <property type="component" value="Chromosome"/>
</dbReference>
<dbReference type="GO" id="GO:0005886">
    <property type="term" value="C:plasma membrane"/>
    <property type="evidence" value="ECO:0007669"/>
    <property type="project" value="UniProtKB-SubCell"/>
</dbReference>
<dbReference type="GO" id="GO:0009002">
    <property type="term" value="F:serine-type D-Ala-D-Ala carboxypeptidase activity"/>
    <property type="evidence" value="ECO:0007669"/>
    <property type="project" value="UniProtKB-UniRule"/>
</dbReference>
<dbReference type="GO" id="GO:0006508">
    <property type="term" value="P:proteolysis"/>
    <property type="evidence" value="ECO:0007669"/>
    <property type="project" value="UniProtKB-KW"/>
</dbReference>
<dbReference type="Gene3D" id="3.40.710.10">
    <property type="entry name" value="DD-peptidase/beta-lactamase superfamily"/>
    <property type="match status" value="1"/>
</dbReference>
<dbReference type="HAMAP" id="MF_01034">
    <property type="entry name" value="S12_YfeW"/>
    <property type="match status" value="1"/>
</dbReference>
<dbReference type="InterPro" id="IPR001466">
    <property type="entry name" value="Beta-lactam-related"/>
</dbReference>
<dbReference type="InterPro" id="IPR012338">
    <property type="entry name" value="Beta-lactam/transpept-like"/>
</dbReference>
<dbReference type="InterPro" id="IPR050789">
    <property type="entry name" value="Diverse_Enzym_Activities"/>
</dbReference>
<dbReference type="InterPro" id="IPR022849">
    <property type="entry name" value="Pept_S12_YfeW/YbbE-like"/>
</dbReference>
<dbReference type="NCBIfam" id="NF002968">
    <property type="entry name" value="PRK03642.1"/>
    <property type="match status" value="1"/>
</dbReference>
<dbReference type="PANTHER" id="PTHR43283">
    <property type="entry name" value="BETA-LACTAMASE-RELATED"/>
    <property type="match status" value="1"/>
</dbReference>
<dbReference type="PANTHER" id="PTHR43283:SF11">
    <property type="entry name" value="BETA-LACTAMASE-RELATED DOMAIN-CONTAINING PROTEIN"/>
    <property type="match status" value="1"/>
</dbReference>
<dbReference type="Pfam" id="PF00144">
    <property type="entry name" value="Beta-lactamase"/>
    <property type="match status" value="1"/>
</dbReference>
<dbReference type="SUPFAM" id="SSF56601">
    <property type="entry name" value="beta-lactamase/transpeptidase-like"/>
    <property type="match status" value="1"/>
</dbReference>